<evidence type="ECO:0000255" key="1">
    <source>
        <dbReference type="HAMAP-Rule" id="MF_01358"/>
    </source>
</evidence>
<accession>A4QJY8</accession>
<keyword id="KW-0150">Chloroplast</keyword>
<keyword id="KW-0472">Membrane</keyword>
<keyword id="KW-0520">NAD</keyword>
<keyword id="KW-0521">NADP</keyword>
<keyword id="KW-0934">Plastid</keyword>
<keyword id="KW-0618">Plastoquinone</keyword>
<keyword id="KW-0874">Quinone</keyword>
<keyword id="KW-0793">Thylakoid</keyword>
<keyword id="KW-1278">Translocase</keyword>
<keyword id="KW-0813">Transport</keyword>
<proteinExistence type="inferred from homology"/>
<sequence>MKRPVTGKDLMIVNMGPHHPSMHGVLRLIVTLDGEDVVDCEPILGYLHRGMEKIAENRAIIQYLPYVTRWDYLATMFTEAITVNGPEQLGNIQVPKRASYIRVIMLELSRIASHLLWLGPFMADIGAQTPFFYIFREREFVYDLFEAATGMRMMHNFFRIGGIAADLPYGWIDKCLDFCDYFLTEVVEYQKLITRNPIFLERVEGVGIIGGEEAINWGLSGPMLRASGIPWDLRKVDRYESYDEFEWDIQWQKQGDSLARYLVRLNEMTESIKIIQQALEGLPGGPYENLESRGFDRKRNPEWNDFEYRFISKKPSPTFELSKQELYVRVEAPKGELGIFLIGDQSGFPWRWKIRPPGFINLQILPELVKRMKLADIMTILGSIDIIMGEVDR</sequence>
<dbReference type="EC" id="7.1.1.-" evidence="1"/>
<dbReference type="EMBL" id="AP009368">
    <property type="protein sequence ID" value="BAF49996.1"/>
    <property type="molecule type" value="Genomic_DNA"/>
</dbReference>
<dbReference type="RefSeq" id="YP_001123171.1">
    <property type="nucleotide sequence ID" value="NC_009267.1"/>
</dbReference>
<dbReference type="SMR" id="A4QJY8"/>
<dbReference type="GeneID" id="4962422"/>
<dbReference type="GO" id="GO:0009535">
    <property type="term" value="C:chloroplast thylakoid membrane"/>
    <property type="evidence" value="ECO:0007669"/>
    <property type="project" value="UniProtKB-SubCell"/>
</dbReference>
<dbReference type="GO" id="GO:0051287">
    <property type="term" value="F:NAD binding"/>
    <property type="evidence" value="ECO:0007669"/>
    <property type="project" value="InterPro"/>
</dbReference>
<dbReference type="GO" id="GO:0016655">
    <property type="term" value="F:oxidoreductase activity, acting on NAD(P)H, quinone or similar compound as acceptor"/>
    <property type="evidence" value="ECO:0007669"/>
    <property type="project" value="UniProtKB-UniRule"/>
</dbReference>
<dbReference type="GO" id="GO:0048038">
    <property type="term" value="F:quinone binding"/>
    <property type="evidence" value="ECO:0007669"/>
    <property type="project" value="UniProtKB-KW"/>
</dbReference>
<dbReference type="GO" id="GO:0019684">
    <property type="term" value="P:photosynthesis, light reaction"/>
    <property type="evidence" value="ECO:0007669"/>
    <property type="project" value="UniProtKB-UniRule"/>
</dbReference>
<dbReference type="FunFam" id="1.10.645.10:FF:000003">
    <property type="entry name" value="NAD(P)H-quinone oxidoreductase subunit H, chloroplastic"/>
    <property type="match status" value="1"/>
</dbReference>
<dbReference type="Gene3D" id="1.10.645.10">
    <property type="entry name" value="Cytochrome-c3 Hydrogenase, chain B"/>
    <property type="match status" value="1"/>
</dbReference>
<dbReference type="HAMAP" id="MF_01358">
    <property type="entry name" value="NDH1_NuoD"/>
    <property type="match status" value="1"/>
</dbReference>
<dbReference type="InterPro" id="IPR001135">
    <property type="entry name" value="NADH_Q_OxRdtase_suD"/>
</dbReference>
<dbReference type="InterPro" id="IPR014029">
    <property type="entry name" value="NADH_UbQ_OxRdtase_49kDa_CS"/>
</dbReference>
<dbReference type="InterPro" id="IPR022885">
    <property type="entry name" value="NDH1_su_D/H"/>
</dbReference>
<dbReference type="InterPro" id="IPR029014">
    <property type="entry name" value="NiFe-Hase_large"/>
</dbReference>
<dbReference type="NCBIfam" id="NF004739">
    <property type="entry name" value="PRK06075.1"/>
    <property type="match status" value="1"/>
</dbReference>
<dbReference type="NCBIfam" id="NF005649">
    <property type="entry name" value="PRK07415.1"/>
    <property type="match status" value="1"/>
</dbReference>
<dbReference type="PANTHER" id="PTHR11993:SF10">
    <property type="entry name" value="NADH DEHYDROGENASE [UBIQUINONE] IRON-SULFUR PROTEIN 2, MITOCHONDRIAL"/>
    <property type="match status" value="1"/>
</dbReference>
<dbReference type="PANTHER" id="PTHR11993">
    <property type="entry name" value="NADH-UBIQUINONE OXIDOREDUCTASE 49 KDA SUBUNIT"/>
    <property type="match status" value="1"/>
</dbReference>
<dbReference type="Pfam" id="PF00346">
    <property type="entry name" value="Complex1_49kDa"/>
    <property type="match status" value="1"/>
</dbReference>
<dbReference type="SUPFAM" id="SSF56762">
    <property type="entry name" value="HydB/Nqo4-like"/>
    <property type="match status" value="1"/>
</dbReference>
<dbReference type="PROSITE" id="PS00535">
    <property type="entry name" value="COMPLEX1_49K"/>
    <property type="match status" value="1"/>
</dbReference>
<name>NDHH_OLIPU</name>
<protein>
    <recommendedName>
        <fullName evidence="1">NAD(P)H-quinone oxidoreductase subunit H, chloroplastic</fullName>
        <ecNumber evidence="1">7.1.1.-</ecNumber>
    </recommendedName>
    <alternativeName>
        <fullName>NAD(P)H dehydrogenase subunit H</fullName>
    </alternativeName>
    <alternativeName>
        <fullName evidence="1">NADH-plastoquinone oxidoreductase 49 kDa subunit</fullName>
    </alternativeName>
    <alternativeName>
        <fullName evidence="1">NADH-plastoquinone oxidoreductase subunit H</fullName>
    </alternativeName>
</protein>
<organism>
    <name type="scientific">Olimarabidopsis pumila</name>
    <name type="common">Dwarf rocket</name>
    <name type="synonym">Arabidopsis griffithiana</name>
    <dbReference type="NCBI Taxonomy" id="74718"/>
    <lineage>
        <taxon>Eukaryota</taxon>
        <taxon>Viridiplantae</taxon>
        <taxon>Streptophyta</taxon>
        <taxon>Embryophyta</taxon>
        <taxon>Tracheophyta</taxon>
        <taxon>Spermatophyta</taxon>
        <taxon>Magnoliopsida</taxon>
        <taxon>eudicotyledons</taxon>
        <taxon>Gunneridae</taxon>
        <taxon>Pentapetalae</taxon>
        <taxon>rosids</taxon>
        <taxon>malvids</taxon>
        <taxon>Brassicales</taxon>
        <taxon>Brassicaceae</taxon>
        <taxon>Alyssopsideae</taxon>
        <taxon>Olimarabidopsis</taxon>
    </lineage>
</organism>
<comment type="function">
    <text evidence="1">NDH shuttles electrons from NAD(P)H:plastoquinone, via FMN and iron-sulfur (Fe-S) centers, to quinones in the photosynthetic chain and possibly in a chloroplast respiratory chain. The immediate electron acceptor for the enzyme in this species is believed to be plastoquinone. Couples the redox reaction to proton translocation, and thus conserves the redox energy in a proton gradient.</text>
</comment>
<comment type="catalytic activity">
    <reaction evidence="1">
        <text>a plastoquinone + NADH + (n+1) H(+)(in) = a plastoquinol + NAD(+) + n H(+)(out)</text>
        <dbReference type="Rhea" id="RHEA:42608"/>
        <dbReference type="Rhea" id="RHEA-COMP:9561"/>
        <dbReference type="Rhea" id="RHEA-COMP:9562"/>
        <dbReference type="ChEBI" id="CHEBI:15378"/>
        <dbReference type="ChEBI" id="CHEBI:17757"/>
        <dbReference type="ChEBI" id="CHEBI:57540"/>
        <dbReference type="ChEBI" id="CHEBI:57945"/>
        <dbReference type="ChEBI" id="CHEBI:62192"/>
    </reaction>
</comment>
<comment type="catalytic activity">
    <reaction evidence="1">
        <text>a plastoquinone + NADPH + (n+1) H(+)(in) = a plastoquinol + NADP(+) + n H(+)(out)</text>
        <dbReference type="Rhea" id="RHEA:42612"/>
        <dbReference type="Rhea" id="RHEA-COMP:9561"/>
        <dbReference type="Rhea" id="RHEA-COMP:9562"/>
        <dbReference type="ChEBI" id="CHEBI:15378"/>
        <dbReference type="ChEBI" id="CHEBI:17757"/>
        <dbReference type="ChEBI" id="CHEBI:57783"/>
        <dbReference type="ChEBI" id="CHEBI:58349"/>
        <dbReference type="ChEBI" id="CHEBI:62192"/>
    </reaction>
</comment>
<comment type="subunit">
    <text evidence="1">NDH is composed of at least 16 different subunits, 5 of which are encoded in the nucleus.</text>
</comment>
<comment type="subcellular location">
    <subcellularLocation>
        <location evidence="1">Plastid</location>
        <location evidence="1">Chloroplast thylakoid membrane</location>
        <topology evidence="1">Peripheral membrane protein</topology>
        <orientation evidence="1">Stromal side</orientation>
    </subcellularLocation>
</comment>
<comment type="similarity">
    <text evidence="1">Belongs to the complex I 49 kDa subunit family.</text>
</comment>
<gene>
    <name evidence="1" type="primary">ndhH</name>
</gene>
<geneLocation type="chloroplast"/>
<feature type="chain" id="PRO_0000358016" description="NAD(P)H-quinone oxidoreductase subunit H, chloroplastic">
    <location>
        <begin position="1"/>
        <end position="393"/>
    </location>
</feature>
<reference key="1">
    <citation type="submission" date="2007-03" db="EMBL/GenBank/DDBJ databases">
        <title>Sequence analysis of Arabidopsis pumila JS2 chloroplast DNA.</title>
        <authorList>
            <person name="Hosouchi T."/>
            <person name="Tsuruoka H."/>
            <person name="Kotani H."/>
        </authorList>
    </citation>
    <scope>NUCLEOTIDE SEQUENCE [LARGE SCALE GENOMIC DNA]</scope>
</reference>